<feature type="chain" id="PRO_0000235621" description="5'-nucleotidase SurE">
    <location>
        <begin position="1"/>
        <end position="252"/>
    </location>
</feature>
<feature type="binding site" evidence="1">
    <location>
        <position position="8"/>
    </location>
    <ligand>
        <name>a divalent metal cation</name>
        <dbReference type="ChEBI" id="CHEBI:60240"/>
    </ligand>
</feature>
<feature type="binding site" evidence="1">
    <location>
        <position position="9"/>
    </location>
    <ligand>
        <name>a divalent metal cation</name>
        <dbReference type="ChEBI" id="CHEBI:60240"/>
    </ligand>
</feature>
<feature type="binding site" evidence="1">
    <location>
        <position position="39"/>
    </location>
    <ligand>
        <name>a divalent metal cation</name>
        <dbReference type="ChEBI" id="CHEBI:60240"/>
    </ligand>
</feature>
<feature type="binding site" evidence="1">
    <location>
        <position position="91"/>
    </location>
    <ligand>
        <name>a divalent metal cation</name>
        <dbReference type="ChEBI" id="CHEBI:60240"/>
    </ligand>
</feature>
<dbReference type="EC" id="3.1.3.5" evidence="1"/>
<dbReference type="EMBL" id="CR628337">
    <property type="protein sequence ID" value="CAH15484.1"/>
    <property type="molecule type" value="Genomic_DNA"/>
</dbReference>
<dbReference type="RefSeq" id="WP_011215330.1">
    <property type="nucleotide sequence ID" value="NC_006369.1"/>
</dbReference>
<dbReference type="SMR" id="Q5WX53"/>
<dbReference type="KEGG" id="lpf:lpl1245"/>
<dbReference type="LegioList" id="lpl1245"/>
<dbReference type="HOGENOM" id="CLU_045192_1_2_6"/>
<dbReference type="Proteomes" id="UP000002517">
    <property type="component" value="Chromosome"/>
</dbReference>
<dbReference type="GO" id="GO:0005737">
    <property type="term" value="C:cytoplasm"/>
    <property type="evidence" value="ECO:0007669"/>
    <property type="project" value="UniProtKB-SubCell"/>
</dbReference>
<dbReference type="GO" id="GO:0008254">
    <property type="term" value="F:3'-nucleotidase activity"/>
    <property type="evidence" value="ECO:0007669"/>
    <property type="project" value="TreeGrafter"/>
</dbReference>
<dbReference type="GO" id="GO:0008253">
    <property type="term" value="F:5'-nucleotidase activity"/>
    <property type="evidence" value="ECO:0007669"/>
    <property type="project" value="UniProtKB-UniRule"/>
</dbReference>
<dbReference type="GO" id="GO:0004309">
    <property type="term" value="F:exopolyphosphatase activity"/>
    <property type="evidence" value="ECO:0007669"/>
    <property type="project" value="TreeGrafter"/>
</dbReference>
<dbReference type="GO" id="GO:0046872">
    <property type="term" value="F:metal ion binding"/>
    <property type="evidence" value="ECO:0007669"/>
    <property type="project" value="UniProtKB-UniRule"/>
</dbReference>
<dbReference type="GO" id="GO:0000166">
    <property type="term" value="F:nucleotide binding"/>
    <property type="evidence" value="ECO:0007669"/>
    <property type="project" value="UniProtKB-KW"/>
</dbReference>
<dbReference type="FunFam" id="3.40.1210.10:FF:000001">
    <property type="entry name" value="5'/3'-nucleotidase SurE"/>
    <property type="match status" value="1"/>
</dbReference>
<dbReference type="Gene3D" id="3.40.1210.10">
    <property type="entry name" value="Survival protein SurE-like phosphatase/nucleotidase"/>
    <property type="match status" value="1"/>
</dbReference>
<dbReference type="HAMAP" id="MF_00060">
    <property type="entry name" value="SurE"/>
    <property type="match status" value="1"/>
</dbReference>
<dbReference type="InterPro" id="IPR030048">
    <property type="entry name" value="SurE"/>
</dbReference>
<dbReference type="InterPro" id="IPR002828">
    <property type="entry name" value="SurE-like_Pase/nucleotidase"/>
</dbReference>
<dbReference type="InterPro" id="IPR036523">
    <property type="entry name" value="SurE-like_sf"/>
</dbReference>
<dbReference type="NCBIfam" id="NF001489">
    <property type="entry name" value="PRK00346.1-3"/>
    <property type="match status" value="1"/>
</dbReference>
<dbReference type="NCBIfam" id="NF001490">
    <property type="entry name" value="PRK00346.1-4"/>
    <property type="match status" value="1"/>
</dbReference>
<dbReference type="NCBIfam" id="TIGR00087">
    <property type="entry name" value="surE"/>
    <property type="match status" value="1"/>
</dbReference>
<dbReference type="PANTHER" id="PTHR30457">
    <property type="entry name" value="5'-NUCLEOTIDASE SURE"/>
    <property type="match status" value="1"/>
</dbReference>
<dbReference type="PANTHER" id="PTHR30457:SF12">
    <property type="entry name" value="5'_3'-NUCLEOTIDASE SURE"/>
    <property type="match status" value="1"/>
</dbReference>
<dbReference type="Pfam" id="PF01975">
    <property type="entry name" value="SurE"/>
    <property type="match status" value="1"/>
</dbReference>
<dbReference type="SUPFAM" id="SSF64167">
    <property type="entry name" value="SurE-like"/>
    <property type="match status" value="1"/>
</dbReference>
<reference key="1">
    <citation type="journal article" date="2004" name="Nat. Genet.">
        <title>Evidence in the Legionella pneumophila genome for exploitation of host cell functions and high genome plasticity.</title>
        <authorList>
            <person name="Cazalet C."/>
            <person name="Rusniok C."/>
            <person name="Brueggemann H."/>
            <person name="Zidane N."/>
            <person name="Magnier A."/>
            <person name="Ma L."/>
            <person name="Tichit M."/>
            <person name="Jarraud S."/>
            <person name="Bouchier C."/>
            <person name="Vandenesch F."/>
            <person name="Kunst F."/>
            <person name="Etienne J."/>
            <person name="Glaser P."/>
            <person name="Buchrieser C."/>
        </authorList>
    </citation>
    <scope>NUCLEOTIDE SEQUENCE [LARGE SCALE GENOMIC DNA]</scope>
    <source>
        <strain>Lens</strain>
    </source>
</reference>
<keyword id="KW-0963">Cytoplasm</keyword>
<keyword id="KW-0378">Hydrolase</keyword>
<keyword id="KW-0479">Metal-binding</keyword>
<keyword id="KW-0547">Nucleotide-binding</keyword>
<gene>
    <name evidence="1" type="primary">surE</name>
    <name type="ordered locus">lpl1245</name>
</gene>
<organism>
    <name type="scientific">Legionella pneumophila (strain Lens)</name>
    <dbReference type="NCBI Taxonomy" id="297245"/>
    <lineage>
        <taxon>Bacteria</taxon>
        <taxon>Pseudomonadati</taxon>
        <taxon>Pseudomonadota</taxon>
        <taxon>Gammaproteobacteria</taxon>
        <taxon>Legionellales</taxon>
        <taxon>Legionellaceae</taxon>
        <taxon>Legionella</taxon>
    </lineage>
</organism>
<comment type="function">
    <text evidence="1">Nucleotidase that shows phosphatase activity on nucleoside 5'-monophosphates.</text>
</comment>
<comment type="catalytic activity">
    <reaction evidence="1">
        <text>a ribonucleoside 5'-phosphate + H2O = a ribonucleoside + phosphate</text>
        <dbReference type="Rhea" id="RHEA:12484"/>
        <dbReference type="ChEBI" id="CHEBI:15377"/>
        <dbReference type="ChEBI" id="CHEBI:18254"/>
        <dbReference type="ChEBI" id="CHEBI:43474"/>
        <dbReference type="ChEBI" id="CHEBI:58043"/>
        <dbReference type="EC" id="3.1.3.5"/>
    </reaction>
</comment>
<comment type="cofactor">
    <cofactor evidence="1">
        <name>a divalent metal cation</name>
        <dbReference type="ChEBI" id="CHEBI:60240"/>
    </cofactor>
    <text evidence="1">Binds 1 divalent metal cation per subunit.</text>
</comment>
<comment type="subcellular location">
    <subcellularLocation>
        <location evidence="1">Cytoplasm</location>
    </subcellularLocation>
</comment>
<comment type="similarity">
    <text evidence="1">Belongs to the SurE nucleotidase family.</text>
</comment>
<accession>Q5WX53</accession>
<name>SURE_LEGPL</name>
<evidence type="ECO:0000255" key="1">
    <source>
        <dbReference type="HAMAP-Rule" id="MF_00060"/>
    </source>
</evidence>
<protein>
    <recommendedName>
        <fullName evidence="1">5'-nucleotidase SurE</fullName>
        <ecNumber evidence="1">3.1.3.5</ecNumber>
    </recommendedName>
    <alternativeName>
        <fullName evidence="1">Nucleoside 5'-monophosphate phosphohydrolase</fullName>
    </alternativeName>
</protein>
<proteinExistence type="inferred from homology"/>
<sequence>MKILVSNDDGVLAPGIKILANELSTLGEVKVVAPDRNRSGASNSLTLTQPLRVKQLDNGYYSVDGTPTDCVHLALTGFLEPMADIVVSGINEGANLGDDVLYSGTVAAAMEGRYLGLPAIAISMVGDNIQHYETAAIIAKQLVIKLSANKLPSQTILNVNVPDLPLNQIRGLQVTRLGTRHSAEPIIKEYDPRGRPIYWVGPPGIEADAGAGTDFFAIKTGHVSITPLHLDMTHYKLFDHLSNLLNEICIEN</sequence>